<organism>
    <name type="scientific">Shigella flexneri serotype 5b (strain 8401)</name>
    <dbReference type="NCBI Taxonomy" id="373384"/>
    <lineage>
        <taxon>Bacteria</taxon>
        <taxon>Pseudomonadati</taxon>
        <taxon>Pseudomonadota</taxon>
        <taxon>Gammaproteobacteria</taxon>
        <taxon>Enterobacterales</taxon>
        <taxon>Enterobacteriaceae</taxon>
        <taxon>Shigella</taxon>
    </lineage>
</organism>
<comment type="function">
    <text evidence="1">An aminoacyl-tRNA editing enzyme that deacylates mischarged D-aminoacyl-tRNAs. Also deacylates mischarged glycyl-tRNA(Ala), protecting cells against glycine mischarging by AlaRS. Acts via tRNA-based rather than protein-based catalysis; rejects L-amino acids rather than detecting D-amino acids in the active site. By recycling D-aminoacyl-tRNA to D-amino acids and free tRNA molecules, this enzyme counteracts the toxicity associated with the formation of D-aminoacyl-tRNA entities in vivo and helps enforce protein L-homochirality.</text>
</comment>
<comment type="catalytic activity">
    <reaction evidence="1">
        <text>glycyl-tRNA(Ala) + H2O = tRNA(Ala) + glycine + H(+)</text>
        <dbReference type="Rhea" id="RHEA:53744"/>
        <dbReference type="Rhea" id="RHEA-COMP:9657"/>
        <dbReference type="Rhea" id="RHEA-COMP:13640"/>
        <dbReference type="ChEBI" id="CHEBI:15377"/>
        <dbReference type="ChEBI" id="CHEBI:15378"/>
        <dbReference type="ChEBI" id="CHEBI:57305"/>
        <dbReference type="ChEBI" id="CHEBI:78442"/>
        <dbReference type="ChEBI" id="CHEBI:78522"/>
        <dbReference type="EC" id="3.1.1.96"/>
    </reaction>
</comment>
<comment type="catalytic activity">
    <reaction evidence="1">
        <text>a D-aminoacyl-tRNA + H2O = a tRNA + a D-alpha-amino acid + H(+)</text>
        <dbReference type="Rhea" id="RHEA:13953"/>
        <dbReference type="Rhea" id="RHEA-COMP:10123"/>
        <dbReference type="Rhea" id="RHEA-COMP:10124"/>
        <dbReference type="ChEBI" id="CHEBI:15377"/>
        <dbReference type="ChEBI" id="CHEBI:15378"/>
        <dbReference type="ChEBI" id="CHEBI:59871"/>
        <dbReference type="ChEBI" id="CHEBI:78442"/>
        <dbReference type="ChEBI" id="CHEBI:79333"/>
        <dbReference type="EC" id="3.1.1.96"/>
    </reaction>
</comment>
<comment type="subunit">
    <text evidence="1">Homodimer.</text>
</comment>
<comment type="subcellular location">
    <subcellularLocation>
        <location evidence="1">Cytoplasm</location>
    </subcellularLocation>
</comment>
<comment type="similarity">
    <text evidence="1">Belongs to the DTD family.</text>
</comment>
<comment type="caution">
    <text evidence="2">Does not contain the conserved Gly-cisPro motif at positions 137-138 required for rejection of L-amino acids; instead it encodes Ala-Gly.</text>
</comment>
<protein>
    <recommendedName>
        <fullName evidence="1">Probable D-aminoacyl-tRNA deacylase</fullName>
        <shortName evidence="1">DTD</shortName>
        <ecNumber evidence="1">3.1.1.96</ecNumber>
    </recommendedName>
    <alternativeName>
        <fullName evidence="1">Gly-tRNA(Ala) deacylase</fullName>
    </alternativeName>
</protein>
<evidence type="ECO:0000255" key="1">
    <source>
        <dbReference type="HAMAP-Rule" id="MF_00518"/>
    </source>
</evidence>
<evidence type="ECO:0000305" key="2"/>
<gene>
    <name evidence="1" type="primary">dtd</name>
    <name type="ordered locus">SFV_3612</name>
</gene>
<accession>Q0SZ73</accession>
<feature type="chain" id="PRO_1000050890" description="Probable D-aminoacyl-tRNA deacylase">
    <location>
        <begin position="1"/>
        <end position="145"/>
    </location>
</feature>
<keyword id="KW-0963">Cytoplasm</keyword>
<keyword id="KW-0378">Hydrolase</keyword>
<keyword id="KW-0694">RNA-binding</keyword>
<keyword id="KW-0820">tRNA-binding</keyword>
<sequence>MIALIQRVTRASVTVEGEVTGEIGAGLLVLLGVEKDDDEQKANRLCERVLGYRIFSDAEGKMNLNVQQAGGSVLVVSQFTLAADTERGMRPSFSKGASPDRAEALYDYFVERCRQQEMNTQTGRFAADMQVSLVNDAPVTFWLQV</sequence>
<proteinExistence type="inferred from homology"/>
<name>DTD_SHIF8</name>
<reference key="1">
    <citation type="journal article" date="2006" name="BMC Genomics">
        <title>Complete genome sequence of Shigella flexneri 5b and comparison with Shigella flexneri 2a.</title>
        <authorList>
            <person name="Nie H."/>
            <person name="Yang F."/>
            <person name="Zhang X."/>
            <person name="Yang J."/>
            <person name="Chen L."/>
            <person name="Wang J."/>
            <person name="Xiong Z."/>
            <person name="Peng J."/>
            <person name="Sun L."/>
            <person name="Dong J."/>
            <person name="Xue Y."/>
            <person name="Xu X."/>
            <person name="Chen S."/>
            <person name="Yao Z."/>
            <person name="Shen Y."/>
            <person name="Jin Q."/>
        </authorList>
    </citation>
    <scope>NUCLEOTIDE SEQUENCE [LARGE SCALE GENOMIC DNA]</scope>
    <source>
        <strain>8401</strain>
    </source>
</reference>
<dbReference type="EC" id="3.1.1.96" evidence="1"/>
<dbReference type="EMBL" id="CP000266">
    <property type="protein sequence ID" value="ABF05642.1"/>
    <property type="molecule type" value="Genomic_DNA"/>
</dbReference>
<dbReference type="RefSeq" id="WP_000560982.1">
    <property type="nucleotide sequence ID" value="NC_008258.1"/>
</dbReference>
<dbReference type="SMR" id="Q0SZ73"/>
<dbReference type="KEGG" id="sfv:SFV_3612"/>
<dbReference type="HOGENOM" id="CLU_076901_1_0_6"/>
<dbReference type="Proteomes" id="UP000000659">
    <property type="component" value="Chromosome"/>
</dbReference>
<dbReference type="GO" id="GO:0005737">
    <property type="term" value="C:cytoplasm"/>
    <property type="evidence" value="ECO:0007669"/>
    <property type="project" value="UniProtKB-SubCell"/>
</dbReference>
<dbReference type="GO" id="GO:0051500">
    <property type="term" value="F:D-tyrosyl-tRNA(Tyr) deacylase activity"/>
    <property type="evidence" value="ECO:0007669"/>
    <property type="project" value="TreeGrafter"/>
</dbReference>
<dbReference type="GO" id="GO:0106026">
    <property type="term" value="F:Gly-tRNA(Ala) deacylase activity"/>
    <property type="evidence" value="ECO:0007669"/>
    <property type="project" value="UniProtKB-UniRule"/>
</dbReference>
<dbReference type="GO" id="GO:0043908">
    <property type="term" value="F:Ser(Gly)-tRNA(Ala) hydrolase activity"/>
    <property type="evidence" value="ECO:0007669"/>
    <property type="project" value="UniProtKB-UniRule"/>
</dbReference>
<dbReference type="GO" id="GO:0000049">
    <property type="term" value="F:tRNA binding"/>
    <property type="evidence" value="ECO:0007669"/>
    <property type="project" value="UniProtKB-UniRule"/>
</dbReference>
<dbReference type="GO" id="GO:0019478">
    <property type="term" value="P:D-amino acid catabolic process"/>
    <property type="evidence" value="ECO:0007669"/>
    <property type="project" value="UniProtKB-UniRule"/>
</dbReference>
<dbReference type="CDD" id="cd00563">
    <property type="entry name" value="Dtyr_deacylase"/>
    <property type="match status" value="1"/>
</dbReference>
<dbReference type="FunFam" id="3.50.80.10:FF:000001">
    <property type="entry name" value="D-aminoacyl-tRNA deacylase"/>
    <property type="match status" value="1"/>
</dbReference>
<dbReference type="Gene3D" id="3.50.80.10">
    <property type="entry name" value="D-tyrosyl-tRNA(Tyr) deacylase"/>
    <property type="match status" value="1"/>
</dbReference>
<dbReference type="HAMAP" id="MF_00518">
    <property type="entry name" value="Deacylase_Dtd"/>
    <property type="match status" value="1"/>
</dbReference>
<dbReference type="InterPro" id="IPR003732">
    <property type="entry name" value="Daa-tRNA_deacyls_DTD"/>
</dbReference>
<dbReference type="InterPro" id="IPR023509">
    <property type="entry name" value="DTD-like_sf"/>
</dbReference>
<dbReference type="NCBIfam" id="TIGR00256">
    <property type="entry name" value="D-aminoacyl-tRNA deacylase"/>
    <property type="match status" value="1"/>
</dbReference>
<dbReference type="PANTHER" id="PTHR10472:SF5">
    <property type="entry name" value="D-AMINOACYL-TRNA DEACYLASE 1"/>
    <property type="match status" value="1"/>
</dbReference>
<dbReference type="PANTHER" id="PTHR10472">
    <property type="entry name" value="D-TYROSYL-TRNA TYR DEACYLASE"/>
    <property type="match status" value="1"/>
</dbReference>
<dbReference type="Pfam" id="PF02580">
    <property type="entry name" value="Tyr_Deacylase"/>
    <property type="match status" value="1"/>
</dbReference>
<dbReference type="SUPFAM" id="SSF69500">
    <property type="entry name" value="DTD-like"/>
    <property type="match status" value="1"/>
</dbReference>